<comment type="function">
    <text evidence="1">Required for myoblast differentiation into myotubes, possibly acting as a transcriptional regulator of the myogenic program (By similarity). Required for cardiac adaptation to stress through integrated regulation of the AKT/mTOR pathways and FOXO1. Regulates cardiac homeostasis and plays a role in the protection against cardiac hypertrophy (By similarity). Binds chromatin (By similarity). May act as a transcriptional cofactor for ISL1, repressing its transcriptional activity (By similarity). May also repress MYOCD transcriptional activity (By similarity).</text>
</comment>
<comment type="subunit">
    <text evidence="1">Directly interacts with LMNA (By similarity). Interacts with ISL1 (via N-terminal domain); the interaction represses ISL1 transactivator activity (By similarity). Interactions of ISL1 with MLIP1 and GCN5/KAT2A may be mutually exclusive (By similarity).</text>
</comment>
<comment type="interaction">
    <interactant intactId="EBI-12320785">
        <id>Q5VWP3-2</id>
    </interactant>
    <interactant intactId="EBI-713568">
        <id>P45984</id>
        <label>MAPK9</label>
    </interactant>
    <organismsDiffer>false</organismsDiffer>
    <experiments>5</experiments>
</comment>
<comment type="subcellular location">
    <subcellularLocation>
        <location evidence="7">Nucleus</location>
    </subcellularLocation>
    <subcellularLocation>
        <location evidence="1">Nucleus envelope</location>
    </subcellularLocation>
    <subcellularLocation>
        <location evidence="1">Nucleus</location>
        <location evidence="1">PML body</location>
    </subcellularLocation>
    <subcellularLocation>
        <location evidence="7">Cytoplasm</location>
        <location evidence="7">Cytosol</location>
    </subcellularLocation>
    <subcellularLocation>
        <location evidence="1">Cell membrane</location>
        <location evidence="1">Sarcolemma</location>
        <topology evidence="1">Peripheral membrane protein</topology>
        <orientation evidence="1">Cytoplasmic side</orientation>
    </subcellularLocation>
</comment>
<comment type="alternative products">
    <event type="alternative splicing"/>
    <isoform>
        <id>Q5VWP3-3</id>
        <name>3</name>
        <sequence type="displayed"/>
    </isoform>
    <isoform>
        <id>Q5VWP3-1</id>
        <name>1</name>
        <sequence type="described" ref="VSP_061853 VSP_061855"/>
    </isoform>
    <isoform>
        <id>Q5VWP3-2</id>
        <name>2</name>
        <sequence type="described" ref="VSP_061852 VSP_061854 VSP_061857"/>
    </isoform>
    <isoform>
        <id>Q5VWP3-4</id>
        <name>4</name>
        <sequence type="described" ref="VSP_061853 VSP_061856"/>
    </isoform>
</comment>
<comment type="tissue specificity">
    <text evidence="5 6 7">Predominantly expressed in the heart and skeletal muscle (PubMed:21498514, PubMed:26436652, PubMed:34581780). Also detected in liver (PubMed:21498514).</text>
</comment>
<comment type="tissue specificity">
    <molecule>Isoform 2</molecule>
    <text evidence="9">Expressed in skeletal muscle.</text>
</comment>
<comment type="tissue specificity">
    <molecule>Isoform 3</molecule>
    <text evidence="9">Expressed in skeletal muscle.</text>
</comment>
<comment type="disease" evidence="7 8 9 10">
    <disease id="DI-06552">
        <name>Myopathy with myalgia, increased serum creatine kinase, and with or without episodic rhabdomyolysis 1</name>
        <acronym>MMCKR1</acronym>
        <description>An autosomal recessive muscular disorder characterized by mild muscle weakness, early fatigue after mild to moderate physical exertion, exercise-induced muscle pain, variable susceptibility to episodes of rhabdomyolysis, and elevated serum creatine kinase levels. Rarely, affected individuals may demonstrate cardiac involvement, including left ventricular dysfunction or rhythm abnormalities.</description>
        <dbReference type="MIM" id="620138"/>
    </disease>
    <text evidence="9">The disease is caused by variants affecting the gene represented in this entry. In a patient homozygous for the variant p.Gln762Ter, it has been shown that skeletal muscles display a clear alteration of the alternative splicing isoform expression pattern. While the variant transcript likely undergoes nonsense-mediated mRNA decay, cells may attempt to compensate for truncated MLIP proteins by expressing alternative transcripts; this partial escape mechanism may account for the relatively mild phenotype in this individual, who did not develop significant symptoms until around 50 years of age.</text>
</comment>
<comment type="miscellaneous">
    <text evidence="13">It is uncertain whether Met-1 or Met-18 is the initiator.</text>
</comment>
<reference key="1">
    <citation type="journal article" date="2004" name="Nat. Genet.">
        <title>Complete sequencing and characterization of 21,243 full-length human cDNAs.</title>
        <authorList>
            <person name="Ota T."/>
            <person name="Suzuki Y."/>
            <person name="Nishikawa T."/>
            <person name="Otsuki T."/>
            <person name="Sugiyama T."/>
            <person name="Irie R."/>
            <person name="Wakamatsu A."/>
            <person name="Hayashi K."/>
            <person name="Sato H."/>
            <person name="Nagai K."/>
            <person name="Kimura K."/>
            <person name="Makita H."/>
            <person name="Sekine M."/>
            <person name="Obayashi M."/>
            <person name="Nishi T."/>
            <person name="Shibahara T."/>
            <person name="Tanaka T."/>
            <person name="Ishii S."/>
            <person name="Yamamoto J."/>
            <person name="Saito K."/>
            <person name="Kawai Y."/>
            <person name="Isono Y."/>
            <person name="Nakamura Y."/>
            <person name="Nagahari K."/>
            <person name="Murakami K."/>
            <person name="Yasuda T."/>
            <person name="Iwayanagi T."/>
            <person name="Wagatsuma M."/>
            <person name="Shiratori A."/>
            <person name="Sudo H."/>
            <person name="Hosoiri T."/>
            <person name="Kaku Y."/>
            <person name="Kodaira H."/>
            <person name="Kondo H."/>
            <person name="Sugawara M."/>
            <person name="Takahashi M."/>
            <person name="Kanda K."/>
            <person name="Yokoi T."/>
            <person name="Furuya T."/>
            <person name="Kikkawa E."/>
            <person name="Omura Y."/>
            <person name="Abe K."/>
            <person name="Kamihara K."/>
            <person name="Katsuta N."/>
            <person name="Sato K."/>
            <person name="Tanikawa M."/>
            <person name="Yamazaki M."/>
            <person name="Ninomiya K."/>
            <person name="Ishibashi T."/>
            <person name="Yamashita H."/>
            <person name="Murakawa K."/>
            <person name="Fujimori K."/>
            <person name="Tanai H."/>
            <person name="Kimata M."/>
            <person name="Watanabe M."/>
            <person name="Hiraoka S."/>
            <person name="Chiba Y."/>
            <person name="Ishida S."/>
            <person name="Ono Y."/>
            <person name="Takiguchi S."/>
            <person name="Watanabe S."/>
            <person name="Yosida M."/>
            <person name="Hotuta T."/>
            <person name="Kusano J."/>
            <person name="Kanehori K."/>
            <person name="Takahashi-Fujii A."/>
            <person name="Hara H."/>
            <person name="Tanase T.-O."/>
            <person name="Nomura Y."/>
            <person name="Togiya S."/>
            <person name="Komai F."/>
            <person name="Hara R."/>
            <person name="Takeuchi K."/>
            <person name="Arita M."/>
            <person name="Imose N."/>
            <person name="Musashino K."/>
            <person name="Yuuki H."/>
            <person name="Oshima A."/>
            <person name="Sasaki N."/>
            <person name="Aotsuka S."/>
            <person name="Yoshikawa Y."/>
            <person name="Matsunawa H."/>
            <person name="Ichihara T."/>
            <person name="Shiohata N."/>
            <person name="Sano S."/>
            <person name="Moriya S."/>
            <person name="Momiyama H."/>
            <person name="Satoh N."/>
            <person name="Takami S."/>
            <person name="Terashima Y."/>
            <person name="Suzuki O."/>
            <person name="Nakagawa S."/>
            <person name="Senoh A."/>
            <person name="Mizoguchi H."/>
            <person name="Goto Y."/>
            <person name="Shimizu F."/>
            <person name="Wakebe H."/>
            <person name="Hishigaki H."/>
            <person name="Watanabe T."/>
            <person name="Sugiyama A."/>
            <person name="Takemoto M."/>
            <person name="Kawakami B."/>
            <person name="Yamazaki M."/>
            <person name="Watanabe K."/>
            <person name="Kumagai A."/>
            <person name="Itakura S."/>
            <person name="Fukuzumi Y."/>
            <person name="Fujimori Y."/>
            <person name="Komiyama M."/>
            <person name="Tashiro H."/>
            <person name="Tanigami A."/>
            <person name="Fujiwara T."/>
            <person name="Ono T."/>
            <person name="Yamada K."/>
            <person name="Fujii Y."/>
            <person name="Ozaki K."/>
            <person name="Hirao M."/>
            <person name="Ohmori Y."/>
            <person name="Kawabata A."/>
            <person name="Hikiji T."/>
            <person name="Kobatake N."/>
            <person name="Inagaki H."/>
            <person name="Ikema Y."/>
            <person name="Okamoto S."/>
            <person name="Okitani R."/>
            <person name="Kawakami T."/>
            <person name="Noguchi S."/>
            <person name="Itoh T."/>
            <person name="Shigeta K."/>
            <person name="Senba T."/>
            <person name="Matsumura K."/>
            <person name="Nakajima Y."/>
            <person name="Mizuno T."/>
            <person name="Morinaga M."/>
            <person name="Sasaki M."/>
            <person name="Togashi T."/>
            <person name="Oyama M."/>
            <person name="Hata H."/>
            <person name="Watanabe M."/>
            <person name="Komatsu T."/>
            <person name="Mizushima-Sugano J."/>
            <person name="Satoh T."/>
            <person name="Shirai Y."/>
            <person name="Takahashi Y."/>
            <person name="Nakagawa K."/>
            <person name="Okumura K."/>
            <person name="Nagase T."/>
            <person name="Nomura N."/>
            <person name="Kikuchi H."/>
            <person name="Masuho Y."/>
            <person name="Yamashita R."/>
            <person name="Nakai K."/>
            <person name="Yada T."/>
            <person name="Nakamura Y."/>
            <person name="Ohara O."/>
            <person name="Isogai T."/>
            <person name="Sugano S."/>
        </authorList>
    </citation>
    <scope>NUCLEOTIDE SEQUENCE [LARGE SCALE MRNA] (ISOFORMS 1 AND 3)</scope>
    <scope>VARIANTS ILE-170 AND THR-855</scope>
    <source>
        <tissue>Brain</tissue>
        <tissue>Heart</tissue>
    </source>
</reference>
<reference key="2">
    <citation type="journal article" date="2003" name="Nature">
        <title>The DNA sequence and analysis of human chromosome 6.</title>
        <authorList>
            <person name="Mungall A.J."/>
            <person name="Palmer S.A."/>
            <person name="Sims S.K."/>
            <person name="Edwards C.A."/>
            <person name="Ashurst J.L."/>
            <person name="Wilming L."/>
            <person name="Jones M.C."/>
            <person name="Horton R."/>
            <person name="Hunt S.E."/>
            <person name="Scott C.E."/>
            <person name="Gilbert J.G.R."/>
            <person name="Clamp M.E."/>
            <person name="Bethel G."/>
            <person name="Milne S."/>
            <person name="Ainscough R."/>
            <person name="Almeida J.P."/>
            <person name="Ambrose K.D."/>
            <person name="Andrews T.D."/>
            <person name="Ashwell R.I.S."/>
            <person name="Babbage A.K."/>
            <person name="Bagguley C.L."/>
            <person name="Bailey J."/>
            <person name="Banerjee R."/>
            <person name="Barker D.J."/>
            <person name="Barlow K.F."/>
            <person name="Bates K."/>
            <person name="Beare D.M."/>
            <person name="Beasley H."/>
            <person name="Beasley O."/>
            <person name="Bird C.P."/>
            <person name="Blakey S.E."/>
            <person name="Bray-Allen S."/>
            <person name="Brook J."/>
            <person name="Brown A.J."/>
            <person name="Brown J.Y."/>
            <person name="Burford D.C."/>
            <person name="Burrill W."/>
            <person name="Burton J."/>
            <person name="Carder C."/>
            <person name="Carter N.P."/>
            <person name="Chapman J.C."/>
            <person name="Clark S.Y."/>
            <person name="Clark G."/>
            <person name="Clee C.M."/>
            <person name="Clegg S."/>
            <person name="Cobley V."/>
            <person name="Collier R.E."/>
            <person name="Collins J.E."/>
            <person name="Colman L.K."/>
            <person name="Corby N.R."/>
            <person name="Coville G.J."/>
            <person name="Culley K.M."/>
            <person name="Dhami P."/>
            <person name="Davies J."/>
            <person name="Dunn M."/>
            <person name="Earthrowl M.E."/>
            <person name="Ellington A.E."/>
            <person name="Evans K.A."/>
            <person name="Faulkner L."/>
            <person name="Francis M.D."/>
            <person name="Frankish A."/>
            <person name="Frankland J."/>
            <person name="French L."/>
            <person name="Garner P."/>
            <person name="Garnett J."/>
            <person name="Ghori M.J."/>
            <person name="Gilby L.M."/>
            <person name="Gillson C.J."/>
            <person name="Glithero R.J."/>
            <person name="Grafham D.V."/>
            <person name="Grant M."/>
            <person name="Gribble S."/>
            <person name="Griffiths C."/>
            <person name="Griffiths M.N.D."/>
            <person name="Hall R."/>
            <person name="Halls K.S."/>
            <person name="Hammond S."/>
            <person name="Harley J.L."/>
            <person name="Hart E.A."/>
            <person name="Heath P.D."/>
            <person name="Heathcott R."/>
            <person name="Holmes S.J."/>
            <person name="Howden P.J."/>
            <person name="Howe K.L."/>
            <person name="Howell G.R."/>
            <person name="Huckle E."/>
            <person name="Humphray S.J."/>
            <person name="Humphries M.D."/>
            <person name="Hunt A.R."/>
            <person name="Johnson C.M."/>
            <person name="Joy A.A."/>
            <person name="Kay M."/>
            <person name="Keenan S.J."/>
            <person name="Kimberley A.M."/>
            <person name="King A."/>
            <person name="Laird G.K."/>
            <person name="Langford C."/>
            <person name="Lawlor S."/>
            <person name="Leongamornlert D.A."/>
            <person name="Leversha M."/>
            <person name="Lloyd C.R."/>
            <person name="Lloyd D.M."/>
            <person name="Loveland J.E."/>
            <person name="Lovell J."/>
            <person name="Martin S."/>
            <person name="Mashreghi-Mohammadi M."/>
            <person name="Maslen G.L."/>
            <person name="Matthews L."/>
            <person name="McCann O.T."/>
            <person name="McLaren S.J."/>
            <person name="McLay K."/>
            <person name="McMurray A."/>
            <person name="Moore M.J.F."/>
            <person name="Mullikin J.C."/>
            <person name="Niblett D."/>
            <person name="Nickerson T."/>
            <person name="Novik K.L."/>
            <person name="Oliver K."/>
            <person name="Overton-Larty E.K."/>
            <person name="Parker A."/>
            <person name="Patel R."/>
            <person name="Pearce A.V."/>
            <person name="Peck A.I."/>
            <person name="Phillimore B.J.C.T."/>
            <person name="Phillips S."/>
            <person name="Plumb R.W."/>
            <person name="Porter K.M."/>
            <person name="Ramsey Y."/>
            <person name="Ranby S.A."/>
            <person name="Rice C.M."/>
            <person name="Ross M.T."/>
            <person name="Searle S.M."/>
            <person name="Sehra H.K."/>
            <person name="Sheridan E."/>
            <person name="Skuce C.D."/>
            <person name="Smith S."/>
            <person name="Smith M."/>
            <person name="Spraggon L."/>
            <person name="Squares S.L."/>
            <person name="Steward C.A."/>
            <person name="Sycamore N."/>
            <person name="Tamlyn-Hall G."/>
            <person name="Tester J."/>
            <person name="Theaker A.J."/>
            <person name="Thomas D.W."/>
            <person name="Thorpe A."/>
            <person name="Tracey A."/>
            <person name="Tromans A."/>
            <person name="Tubby B."/>
            <person name="Wall M."/>
            <person name="Wallis J.M."/>
            <person name="West A.P."/>
            <person name="White S.S."/>
            <person name="Whitehead S.L."/>
            <person name="Whittaker H."/>
            <person name="Wild A."/>
            <person name="Willey D.J."/>
            <person name="Wilmer T.E."/>
            <person name="Wood J.M."/>
            <person name="Wray P.W."/>
            <person name="Wyatt J.C."/>
            <person name="Young L."/>
            <person name="Younger R.M."/>
            <person name="Bentley D.R."/>
            <person name="Coulson A."/>
            <person name="Durbin R.M."/>
            <person name="Hubbard T."/>
            <person name="Sulston J.E."/>
            <person name="Dunham I."/>
            <person name="Rogers J."/>
            <person name="Beck S."/>
        </authorList>
    </citation>
    <scope>NUCLEOTIDE SEQUENCE [LARGE SCALE GENOMIC DNA]</scope>
</reference>
<reference key="3">
    <citation type="journal article" date="2004" name="Genome Res.">
        <title>The status, quality, and expansion of the NIH full-length cDNA project: the Mammalian Gene Collection (MGC).</title>
        <authorList>
            <consortium name="The MGC Project Team"/>
        </authorList>
    </citation>
    <scope>NUCLEOTIDE SEQUENCE [LARGE SCALE MRNA] (ISOFORM 2)</scope>
    <scope>VARIANTS ILE-170 AND THR-855</scope>
    <source>
        <tissue>Brain</tissue>
    </source>
</reference>
<reference key="4">
    <citation type="journal article" date="2011" name="J. Biol. Chem.">
        <title>Identification of a novel muscle enriched A-type Lamin interacting protein (MLIP).</title>
        <authorList>
            <person name="Ahmady E."/>
            <person name="Deeke S.A."/>
            <person name="Rabaa S."/>
            <person name="Kouri L."/>
            <person name="Kenney L."/>
            <person name="Stewart A.F."/>
            <person name="Burgon P.G."/>
        </authorList>
    </citation>
    <scope>TISSUE SPECIFICITY</scope>
</reference>
<reference key="5">
    <citation type="journal article" date="2015" name="J. Clin. Invest.">
        <title>Cardiomyocyte-enriched protein CIP protects against pathophysiological stresses and regulates cardiac homeostasis.</title>
        <authorList>
            <person name="Huang Z.P."/>
            <person name="Kataoka M."/>
            <person name="Chen J."/>
            <person name="Wu G."/>
            <person name="Ding J."/>
            <person name="Nie M."/>
            <person name="Lin Z."/>
            <person name="Liu J."/>
            <person name="Hu X."/>
            <person name="Ma L."/>
            <person name="Zhou B."/>
            <person name="Wakimoto H."/>
            <person name="Zeng C."/>
            <person name="Kyselovic J."/>
            <person name="Deng Z.L."/>
            <person name="Seidman C.E."/>
            <person name="Seidman J.G."/>
            <person name="Pu W.T."/>
            <person name="Wang D.Z."/>
        </authorList>
    </citation>
    <scope>TISSUE SPECIFICITY</scope>
    <scope>INVOLVEMENT IN DISEASE</scope>
</reference>
<reference key="6">
    <citation type="journal article" date="2021" name="Brain">
        <title>MLIP causes recessive myopathy with rhabdomyolysis, myalgia and baseline elevated serum creatine kinase.</title>
        <authorList>
            <person name="Lopes Abath Neto O."/>
            <person name="Medne L."/>
            <person name="Donkervoort S."/>
            <person name="Rodriguez-Garcia M.E."/>
            <person name="Bolduc V."/>
            <person name="Hu Y."/>
            <person name="Guadagnin E."/>
            <person name="Foley A.R."/>
            <person name="Brandsema J.F."/>
            <person name="Glanzman A.M."/>
            <person name="Tennekoon G.I."/>
            <person name="Santi M."/>
            <person name="Berger J.H."/>
            <person name="Megeney L.A."/>
            <person name="Komaki H."/>
            <person name="Inoue M."/>
            <person name="Cotrina-Vinagre F.J."/>
            <person name="Hernandez-Lain A."/>
            <person name="Martin-Hernandez E."/>
            <person name="Williams L."/>
            <person name="Borell S."/>
            <person name="Schorling D."/>
            <person name="Lin K."/>
            <person name="Kolokotronis K."/>
            <person name="Lichter-Konecki U."/>
            <person name="Kirschner J."/>
            <person name="Nishino I."/>
            <person name="Banwell B."/>
            <person name="Martinez-Azorin F."/>
            <person name="Burgon P.G."/>
            <person name="Boennemann C.G."/>
        </authorList>
    </citation>
    <scope>INVOLVEMENT IN MMCKR1</scope>
    <scope>VARIANTS MMCKR1 210-GLN--GLN-993 DEL AND 844-ARG--GLN-993 DEL</scope>
    <scope>CHARACTERIZATION OF VARIANTS MMCKR1 210-GLN--GLN-993 DEL AND 844-ARG--GLN-993 DEL</scope>
    <scope>TISSUE SPECIFICITY</scope>
    <scope>SUBCELLULAR LOCATION</scope>
</reference>
<reference key="7">
    <citation type="journal article" date="2022" name="Brain">
        <title>A novel MLIP truncating variant in an 80-year-old patient with late-onset progressive weakness.</title>
        <authorList>
            <person name="Bermejo-Guerrero L."/>
            <person name="Arteche-Lopez A."/>
            <person name="de Fuenmayor Fernandez de la Hoz C."/>
            <person name="Hernandez-Lain A."/>
            <person name="Martin M.A."/>
            <person name="Dominguez-Gonzalez C."/>
        </authorList>
    </citation>
    <scope>INVOLVEMENT IN MMCKR1</scope>
</reference>
<reference key="8">
    <citation type="journal article" date="2022" name="Eur. J. Neurol.">
        <title>Biallelic truncating variants in the muscular A-type lamin-interacting protein (MLIP) gene cause myopathy with hyperCKemia.</title>
        <authorList>
            <person name="Salzer-Sheelo L."/>
            <person name="Fellner A."/>
            <person name="Orenstein N."/>
            <person name="Bazak L."/>
            <person name="Lev-El Halabi N."/>
            <person name="Daue M."/>
            <person name="Smirin-Yosef P."/>
            <person name="Van Hout C.V."/>
            <person name="Fellig Y."/>
            <person name="Ruhrman-Shahar N."/>
            <person name="Staples J."/>
            <person name="Magal N."/>
            <person name="Shuldiner A.R."/>
            <person name="Mitchell B.D."/>
            <person name="Nevo Y."/>
            <person name="Pollin T.I."/>
            <person name="Gonzaga-Jauregui C."/>
            <person name="Basel-Salmon L."/>
        </authorList>
    </citation>
    <scope>INVOLVEMENT IN MMCKR1</scope>
    <scope>VARIANTS MMCKR1 609-LYS--GLN-993 DEL AND 844-ARG--GLN-993 DEL</scope>
</reference>
<reference key="9">
    <citation type="journal article" date="2022" name="NPJ Genom. Med.">
        <title>Novel homozygous nonsense mutation of MLIP and compensatory alternative splicing.</title>
        <authorList>
            <person name="Mezreani J."/>
            <person name="Audet S."/>
            <person name="Martin F."/>
            <person name="Charbonneau J."/>
            <person name="Triassi V."/>
            <person name="Bareke E."/>
            <person name="Laplante A."/>
            <person name="Karamchandani J."/>
            <person name="Massie R."/>
            <person name="Chalk C.H."/>
            <person name="O'Ferrall E."/>
            <person name="Tetreault M."/>
        </authorList>
    </citation>
    <scope>INVOLVEMENT IN MMCKR1</scope>
    <scope>VARIANT MMCKR1 762-GLN--GLN-993 DEL</scope>
    <scope>CHARACTERIZATION OF VARIANT MMCKR1 762-GLN--GLN-993 DEL</scope>
    <scope>TISSUE SPECIFICITY</scope>
</reference>
<keyword id="KW-0025">Alternative splicing</keyword>
<keyword id="KW-1003">Cell membrane</keyword>
<keyword id="KW-0963">Cytoplasm</keyword>
<keyword id="KW-0225">Disease variant</keyword>
<keyword id="KW-0472">Membrane</keyword>
<keyword id="KW-0539">Nucleus</keyword>
<keyword id="KW-0597">Phosphoprotein</keyword>
<keyword id="KW-1267">Proteomics identification</keyword>
<keyword id="KW-1185">Reference proteome</keyword>
<gene>
    <name evidence="14" type="primary">MLIP</name>
    <name type="synonym">C6orf142</name>
    <name evidence="12" type="synonym">Cip</name>
</gene>
<protein>
    <recommendedName>
        <fullName evidence="14">Muscular LMNA-interacting protein</fullName>
    </recommendedName>
    <alternativeName>
        <fullName evidence="12">Cardiac Isl1-interacting protein</fullName>
        <shortName evidence="12">CIP</shortName>
    </alternativeName>
    <alternativeName>
        <fullName evidence="11">Muscular-enriched A-type laminin-interacting protein</fullName>
    </alternativeName>
</protein>
<organism>
    <name type="scientific">Homo sapiens</name>
    <name type="common">Human</name>
    <dbReference type="NCBI Taxonomy" id="9606"/>
    <lineage>
        <taxon>Eukaryota</taxon>
        <taxon>Metazoa</taxon>
        <taxon>Chordata</taxon>
        <taxon>Craniata</taxon>
        <taxon>Vertebrata</taxon>
        <taxon>Euteleostomi</taxon>
        <taxon>Mammalia</taxon>
        <taxon>Eutheria</taxon>
        <taxon>Euarchontoglires</taxon>
        <taxon>Primates</taxon>
        <taxon>Haplorrhini</taxon>
        <taxon>Catarrhini</taxon>
        <taxon>Hominidae</taxon>
        <taxon>Homo</taxon>
    </lineage>
</organism>
<evidence type="ECO:0000250" key="1">
    <source>
        <dbReference type="UniProtKB" id="Q5FW52"/>
    </source>
</evidence>
<evidence type="ECO:0000256" key="2">
    <source>
        <dbReference type="SAM" id="MobiDB-lite"/>
    </source>
</evidence>
<evidence type="ECO:0000269" key="3">
    <source>
    </source>
</evidence>
<evidence type="ECO:0000269" key="4">
    <source>
    </source>
</evidence>
<evidence type="ECO:0000269" key="5">
    <source>
    </source>
</evidence>
<evidence type="ECO:0000269" key="6">
    <source>
    </source>
</evidence>
<evidence type="ECO:0000269" key="7">
    <source>
    </source>
</evidence>
<evidence type="ECO:0000269" key="8">
    <source>
    </source>
</evidence>
<evidence type="ECO:0000269" key="9">
    <source>
    </source>
</evidence>
<evidence type="ECO:0000269" key="10">
    <source>
    </source>
</evidence>
<evidence type="ECO:0000303" key="11">
    <source>
    </source>
</evidence>
<evidence type="ECO:0000303" key="12">
    <source>
    </source>
</evidence>
<evidence type="ECO:0000305" key="13"/>
<evidence type="ECO:0000312" key="14">
    <source>
        <dbReference type="HGNC" id="HGNC:21355"/>
    </source>
</evidence>
<sequence length="993" mass="105914">MLSEQGLLSDCGNNYFQMTSCILSGSIQTTPQVSAGGSEAKPLIFTFVPTVRRLPTHTQLADTSKFLVKIPEESSDKSPETVNRSKSNDYLTLNAGSQQERDQAKLTCPSEVSGTILQEREFEANKLQGMQQSDLFKAEYVLIVDSEGEDEAASRKVEQGPPGGIGTAAVRPKSLAISSSLVSDVVRPKTQGTDLKTSSHPEMLHGMAPQQKHGQLTSSPTTSEQLACKPPAFSFVSPTNPNTPPDPVNLEGASVLEEFHTRRLDVGGAVVEESATYFQTTAHSTPFSASKGTSSTLLFPHSTQLSGSNLPSSTAADPKPGLTSEVLKKTTLTSHVLSHGESPRTSSSPPSSSASLKSNSASYIPVRIVTHSLSPSPKPFTSSFHGSSSTICSQMSSSGNLSKSGVKSPVPSRLALLTAILKSNPSHQRPFSPASCPTFSLNSPASSTLTLDQKEKQTPPTPKKSLSSCSLRAGSPDQGELQVSELTQQSFHLPVFTKSTPLSQAPSLSPTKQASSSLASMNVERTPSPTLKSNTMLSLLQTSTSSSVGLPPVPPSSSLSSLKSKQDGDLRGPENPRNIHTYPSTLASSALSSLSPPINQRATFSSSEKCFHPSPALSSLINRSKRASSQLSGQELNPSALPSLPVSSADFASLPNLRSSSLPHANLPTLVPQLSPSALHPHCGSGTLPSRLGKSESTTPNHRSPVSTPSLPISLTRTEELISPCALSMSTGPENKKSKQYKTKSSYKAFAAIPTNTLLLEQKALDEPAKTESVSKDNTLEPPVELYFPAQLRQQTEELCATIDKVLQDSLSMHSSDSPSRSPKTLLGSDTVKTPTTLPRAAGRETKYANLSSPSSTVSESQLTKPGVIRPVPVKSRILLKKEEEVYEPNPFSKYLEDNSDLFSEQDVTVPPKPVSLHPLYQTKLYPPAKSLLHPQTLSHADCLAPGPFSHLSFSLSDEQENSHTLLSHNACNKLSHPMVAIPEHEALDSKEQ</sequence>
<feature type="chain" id="PRO_0000089538" description="Muscular LMNA-interacting protein">
    <location>
        <begin position="1"/>
        <end position="993"/>
    </location>
</feature>
<feature type="region of interest" description="Interaction with LMNA" evidence="5">
    <location>
        <begin position="1"/>
        <end position="51"/>
    </location>
</feature>
<feature type="region of interest" description="Disordered" evidence="2">
    <location>
        <begin position="71"/>
        <end position="90"/>
    </location>
</feature>
<feature type="region of interest" description="Disordered" evidence="2">
    <location>
        <begin position="152"/>
        <end position="171"/>
    </location>
</feature>
<feature type="region of interest" description="Required for interaction with ISL1" evidence="1">
    <location>
        <begin position="161"/>
        <end position="837"/>
    </location>
</feature>
<feature type="region of interest" description="Disordered" evidence="2">
    <location>
        <begin position="186"/>
        <end position="225"/>
    </location>
</feature>
<feature type="region of interest" description="Disordered" evidence="2">
    <location>
        <begin position="231"/>
        <end position="250"/>
    </location>
</feature>
<feature type="region of interest" description="Disordered" evidence="2">
    <location>
        <begin position="300"/>
        <end position="322"/>
    </location>
</feature>
<feature type="region of interest" description="Disordered" evidence="2">
    <location>
        <begin position="334"/>
        <end position="358"/>
    </location>
</feature>
<feature type="region of interest" description="Disordered" evidence="2">
    <location>
        <begin position="443"/>
        <end position="481"/>
    </location>
</feature>
<feature type="region of interest" description="Disordered" evidence="2">
    <location>
        <begin position="500"/>
        <end position="582"/>
    </location>
</feature>
<feature type="region of interest" description="Disordered" evidence="2">
    <location>
        <begin position="677"/>
        <end position="711"/>
    </location>
</feature>
<feature type="region of interest" description="Disordered" evidence="2">
    <location>
        <begin position="811"/>
        <end position="864"/>
    </location>
</feature>
<feature type="compositionally biased region" description="Polar residues" evidence="2">
    <location>
        <begin position="80"/>
        <end position="90"/>
    </location>
</feature>
<feature type="compositionally biased region" description="Polar residues" evidence="2">
    <location>
        <begin position="212"/>
        <end position="225"/>
    </location>
</feature>
<feature type="compositionally biased region" description="Polar residues" evidence="2">
    <location>
        <begin position="300"/>
        <end position="315"/>
    </location>
</feature>
<feature type="compositionally biased region" description="Low complexity" evidence="2">
    <location>
        <begin position="343"/>
        <end position="358"/>
    </location>
</feature>
<feature type="compositionally biased region" description="Polar residues" evidence="2">
    <location>
        <begin position="500"/>
        <end position="532"/>
    </location>
</feature>
<feature type="compositionally biased region" description="Low complexity" evidence="2">
    <location>
        <begin position="533"/>
        <end position="563"/>
    </location>
</feature>
<feature type="compositionally biased region" description="Basic and acidic residues" evidence="2">
    <location>
        <begin position="564"/>
        <end position="574"/>
    </location>
</feature>
<feature type="compositionally biased region" description="Polar residues" evidence="2">
    <location>
        <begin position="695"/>
        <end position="711"/>
    </location>
</feature>
<feature type="compositionally biased region" description="Low complexity" evidence="2">
    <location>
        <begin position="811"/>
        <end position="822"/>
    </location>
</feature>
<feature type="compositionally biased region" description="Polar residues" evidence="2">
    <location>
        <begin position="849"/>
        <end position="864"/>
    </location>
</feature>
<feature type="modified residue" description="Phosphoserine" evidence="1">
    <location>
        <position position="146"/>
    </location>
</feature>
<feature type="modified residue" description="Phosphoserine" evidence="1">
    <location>
        <position position="818"/>
    </location>
</feature>
<feature type="splice variant" id="VSP_061852" description="In isoform 2.">
    <original>MLSEQGLLSDCGNNYFQMTSCILSGSIQTTPQVSAGGSEAKPLIFTFVPTVRRLPTHTQLADTSKFLVKIPEESSDKSPETVNR</original>
    <variation>MCSWYLGFECS</variation>
    <location>
        <begin position="1"/>
        <end position="84"/>
    </location>
</feature>
<feature type="splice variant" id="VSP_061853" description="In isoform 1 and isoform 4.">
    <original>MLSEQGLLSDCGNNYFQMTSCILSGSIQTTPQ</original>
    <variation>MELEKREKRSLLNKNLEEKLT</variation>
    <location>
        <begin position="1"/>
        <end position="32"/>
    </location>
</feature>
<feature type="splice variant" id="VSP_061854" description="In isoform 2.">
    <location>
        <begin position="216"/>
        <end position="833"/>
    </location>
</feature>
<feature type="splice variant" id="VSP_061855" description="In isoform 1.">
    <location>
        <begin position="216"/>
        <end position="739"/>
    </location>
</feature>
<feature type="splice variant" id="VSP_061856" description="In isoform 4.">
    <original>DVTVPPKPVSLHPLYQTKLYPPAKSLLHPQTLSHADCLAPGPFSHLSFSLSDEQENSHTLLSHNACNKLSHPMVAIPEHEALDSKEQ</original>
    <variation>AAHSVDSYCNGSDTSGPWLL</variation>
    <location>
        <begin position="907"/>
        <end position="993"/>
    </location>
</feature>
<feature type="splice variant" id="VSP_061857" description="In isoform 2.">
    <location>
        <begin position="907"/>
        <end position="974"/>
    </location>
</feature>
<feature type="sequence variant" id="VAR_023381" description="In dbSNP:rs4712056." evidence="3 4">
    <original>V</original>
    <variation>I</variation>
    <location>
        <position position="170"/>
    </location>
</feature>
<feature type="sequence variant" id="VAR_087829" description="In MMCKR1; decreased transcript level in muscle from homozygous patient, no effect on subcellular location." evidence="7">
    <location>
        <begin position="210"/>
        <end position="993"/>
    </location>
</feature>
<feature type="sequence variant" id="VAR_087830" description="In MMCKR1; dbSNP:rs901032025." evidence="8">
    <location>
        <begin position="609"/>
        <end position="993"/>
    </location>
</feature>
<feature type="sequence variant" id="VAR_087831" description="In MMCKR1; may decrease the expression level in muscle from homozygous patient." evidence="9">
    <location>
        <begin position="762"/>
        <end position="993"/>
    </location>
</feature>
<feature type="sequence variant" id="VAR_087832" description="In MMCKR1; decreased transcript level in muscle from homozygous patient, no effect on subcellular location." evidence="7 8">
    <location>
        <begin position="844"/>
        <end position="993"/>
    </location>
</feature>
<feature type="sequence variant" id="VAR_023382" description="In dbSNP:rs6934690." evidence="3 4">
    <original>S</original>
    <variation>T</variation>
    <location>
        <position position="855"/>
    </location>
</feature>
<feature type="sequence variant" id="VAR_056800" description="In dbSNP:rs2275769.">
    <original>P</original>
    <variation>S</variation>
    <location>
        <position position="911"/>
    </location>
</feature>
<feature type="sequence conflict" description="In Ref. 3; AAH09010." evidence="13" ref="3">
    <original>N</original>
    <variation>T</variation>
    <location>
        <position position="890"/>
    </location>
</feature>
<feature type="sequence variant" id="VAR_087833" description="In dbSNP:rs17625497.">
    <original>R</original>
    <variation>H</variation>
    <location sequence="Q5VWP3-1">
        <position position="6"/>
    </location>
</feature>
<accession>Q5VWP3</accession>
<accession>B7Z2N0</accession>
<accession>D6RE05</accession>
<accession>Q96H08</accession>
<accession>Q96NF7</accession>
<name>MLIP_HUMAN</name>
<dbReference type="EMBL" id="AK055530">
    <property type="protein sequence ID" value="BAB70942.1"/>
    <property type="molecule type" value="mRNA"/>
</dbReference>
<dbReference type="EMBL" id="AK294890">
    <property type="protein sequence ID" value="BAH11916.1"/>
    <property type="molecule type" value="mRNA"/>
</dbReference>
<dbReference type="EMBL" id="AL139389">
    <property type="status" value="NOT_ANNOTATED_CDS"/>
    <property type="molecule type" value="Genomic_DNA"/>
</dbReference>
<dbReference type="EMBL" id="AL359380">
    <property type="status" value="NOT_ANNOTATED_CDS"/>
    <property type="molecule type" value="Genomic_DNA"/>
</dbReference>
<dbReference type="EMBL" id="AL365328">
    <property type="status" value="NOT_ANNOTATED_CDS"/>
    <property type="molecule type" value="Genomic_DNA"/>
</dbReference>
<dbReference type="EMBL" id="BC009010">
    <property type="protein sequence ID" value="AAH09010.1"/>
    <property type="molecule type" value="mRNA"/>
</dbReference>
<dbReference type="EMBL" id="AL033384">
    <property type="status" value="NOT_ANNOTATED_CDS"/>
    <property type="molecule type" value="Genomic_DNA"/>
</dbReference>
<dbReference type="CCDS" id="CCDS4954.1">
    <molecule id="Q5VWP3-1"/>
</dbReference>
<dbReference type="CCDS" id="CCDS64448.1">
    <molecule id="Q5VWP3-4"/>
</dbReference>
<dbReference type="CCDS" id="CCDS64449.1">
    <molecule id="Q5VWP3-3"/>
</dbReference>
<dbReference type="RefSeq" id="NP_001268675.1">
    <molecule id="Q5VWP3-4"/>
    <property type="nucleotide sequence ID" value="NM_001281746.2"/>
</dbReference>
<dbReference type="RefSeq" id="NP_001268676.1">
    <molecule id="Q5VWP3-3"/>
    <property type="nucleotide sequence ID" value="NM_001281747.2"/>
</dbReference>
<dbReference type="RefSeq" id="NP_612636.2">
    <molecule id="Q5VWP3-1"/>
    <property type="nucleotide sequence ID" value="NM_138569.3"/>
</dbReference>
<dbReference type="SMR" id="Q5VWP3"/>
<dbReference type="BioGRID" id="124729">
    <property type="interactions" value="10"/>
</dbReference>
<dbReference type="FunCoup" id="Q5VWP3">
    <property type="interactions" value="230"/>
</dbReference>
<dbReference type="IntAct" id="Q5VWP3">
    <property type="interactions" value="2"/>
</dbReference>
<dbReference type="GlyCosmos" id="Q5VWP3">
    <property type="glycosylation" value="1 site, 1 glycan"/>
</dbReference>
<dbReference type="GlyGen" id="Q5VWP3">
    <property type="glycosylation" value="3 sites"/>
</dbReference>
<dbReference type="iPTMnet" id="Q5VWP3"/>
<dbReference type="PhosphoSitePlus" id="Q5VWP3"/>
<dbReference type="SwissPalm" id="Q5VWP3"/>
<dbReference type="BioMuta" id="MLIP"/>
<dbReference type="DMDM" id="296439407"/>
<dbReference type="jPOST" id="Q5VWP3"/>
<dbReference type="MassIVE" id="Q5VWP3"/>
<dbReference type="PeptideAtlas" id="Q5VWP3"/>
<dbReference type="ProteomicsDB" id="14218"/>
<dbReference type="ProteomicsDB" id="65548">
    <molecule id="Q5VWP3-1"/>
</dbReference>
<dbReference type="ProteomicsDB" id="65549">
    <molecule id="Q5VWP3-2"/>
</dbReference>
<dbReference type="ProteomicsDB" id="65550">
    <molecule id="Q5VWP3-3"/>
</dbReference>
<dbReference type="Antibodypedia" id="59659">
    <property type="antibodies" value="52 antibodies from 19 providers"/>
</dbReference>
<dbReference type="DNASU" id="90523"/>
<dbReference type="Ensembl" id="ENST00000274897.9">
    <molecule id="Q5VWP3-1"/>
    <property type="protein sequence ID" value="ENSP00000274897.5"/>
    <property type="gene ID" value="ENSG00000146147.15"/>
</dbReference>
<dbReference type="Ensembl" id="ENST00000370876.6">
    <molecule id="Q5VWP3-2"/>
    <property type="protein sequence ID" value="ENSP00000359913.2"/>
    <property type="gene ID" value="ENSG00000146147.15"/>
</dbReference>
<dbReference type="Ensembl" id="ENST00000502396.6">
    <molecule id="Q5VWP3-3"/>
    <property type="protein sequence ID" value="ENSP00000426290.1"/>
    <property type="gene ID" value="ENSG00000146147.15"/>
</dbReference>
<dbReference type="Ensembl" id="ENST00000514921.5">
    <molecule id="Q5VWP3-4"/>
    <property type="protein sequence ID" value="ENSP00000425142.1"/>
    <property type="gene ID" value="ENSG00000146147.15"/>
</dbReference>
<dbReference type="GeneID" id="90523"/>
<dbReference type="KEGG" id="hsa:90523"/>
<dbReference type="MANE-Select" id="ENST00000502396.6">
    <property type="protein sequence ID" value="ENSP00000426290.1"/>
    <property type="RefSeq nucleotide sequence ID" value="NM_001281747.2"/>
    <property type="RefSeq protein sequence ID" value="NP_001268676.1"/>
</dbReference>
<dbReference type="UCSC" id="uc003pcf.2">
    <molecule id="Q5VWP3-3"/>
    <property type="organism name" value="human"/>
</dbReference>
<dbReference type="AGR" id="HGNC:21355"/>
<dbReference type="CTD" id="90523"/>
<dbReference type="DisGeNET" id="90523"/>
<dbReference type="GeneCards" id="MLIP"/>
<dbReference type="HGNC" id="HGNC:21355">
    <property type="gene designation" value="MLIP"/>
</dbReference>
<dbReference type="HPA" id="ENSG00000146147">
    <property type="expression patterns" value="Group enriched (heart muscle, liver, skeletal muscle, tongue)"/>
</dbReference>
<dbReference type="MalaCards" id="MLIP"/>
<dbReference type="MIM" id="614106">
    <property type="type" value="gene"/>
</dbReference>
<dbReference type="MIM" id="620138">
    <property type="type" value="phenotype"/>
</dbReference>
<dbReference type="neXtProt" id="NX_Q5VWP3"/>
<dbReference type="OpenTargets" id="ENSG00000146147"/>
<dbReference type="PharmGKB" id="PA134918634"/>
<dbReference type="VEuPathDB" id="HostDB:ENSG00000146147"/>
<dbReference type="eggNOG" id="ENOG502QTJV">
    <property type="taxonomic scope" value="Eukaryota"/>
</dbReference>
<dbReference type="GeneTree" id="ENSGT00390000015862"/>
<dbReference type="HOGENOM" id="CLU_047719_0_1_1"/>
<dbReference type="InParanoid" id="Q5VWP3"/>
<dbReference type="OMA" id="TSCEMRH"/>
<dbReference type="OrthoDB" id="9907594at2759"/>
<dbReference type="PAN-GO" id="Q5VWP3">
    <property type="GO annotations" value="6 GO annotations based on evolutionary models"/>
</dbReference>
<dbReference type="PhylomeDB" id="Q5VWP3"/>
<dbReference type="TreeFam" id="TF330818"/>
<dbReference type="PathwayCommons" id="Q5VWP3"/>
<dbReference type="SignaLink" id="Q5VWP3"/>
<dbReference type="BioGRID-ORCS" id="90523">
    <property type="hits" value="9 hits in 1143 CRISPR screens"/>
</dbReference>
<dbReference type="ChiTaRS" id="MLIP">
    <property type="organism name" value="human"/>
</dbReference>
<dbReference type="GeneWiki" id="C6orf142"/>
<dbReference type="GenomeRNAi" id="90523"/>
<dbReference type="Pharos" id="Q5VWP3">
    <property type="development level" value="Tdark"/>
</dbReference>
<dbReference type="PRO" id="PR:Q5VWP3"/>
<dbReference type="Proteomes" id="UP000005640">
    <property type="component" value="Chromosome 6"/>
</dbReference>
<dbReference type="RNAct" id="Q5VWP3">
    <property type="molecule type" value="protein"/>
</dbReference>
<dbReference type="Bgee" id="ENSG00000146147">
    <property type="expression patterns" value="Expressed in left ventricle myocardium and 120 other cell types or tissues"/>
</dbReference>
<dbReference type="ExpressionAtlas" id="Q5VWP3">
    <property type="expression patterns" value="baseline and differential"/>
</dbReference>
<dbReference type="GO" id="GO:0005829">
    <property type="term" value="C:cytosol"/>
    <property type="evidence" value="ECO:0007669"/>
    <property type="project" value="UniProtKB-SubCell"/>
</dbReference>
<dbReference type="GO" id="GO:0005635">
    <property type="term" value="C:nuclear envelope"/>
    <property type="evidence" value="ECO:0000250"/>
    <property type="project" value="UniProtKB"/>
</dbReference>
<dbReference type="GO" id="GO:0031981">
    <property type="term" value="C:nuclear lumen"/>
    <property type="evidence" value="ECO:0000250"/>
    <property type="project" value="UniProtKB"/>
</dbReference>
<dbReference type="GO" id="GO:0005634">
    <property type="term" value="C:nucleus"/>
    <property type="evidence" value="ECO:0000250"/>
    <property type="project" value="UniProtKB"/>
</dbReference>
<dbReference type="GO" id="GO:0016605">
    <property type="term" value="C:PML body"/>
    <property type="evidence" value="ECO:0000250"/>
    <property type="project" value="UniProtKB"/>
</dbReference>
<dbReference type="GO" id="GO:0042383">
    <property type="term" value="C:sarcolemma"/>
    <property type="evidence" value="ECO:0000250"/>
    <property type="project" value="UniProtKB"/>
</dbReference>
<dbReference type="GO" id="GO:0005521">
    <property type="term" value="F:lamin binding"/>
    <property type="evidence" value="ECO:0007669"/>
    <property type="project" value="Ensembl"/>
</dbReference>
<dbReference type="GO" id="GO:0003714">
    <property type="term" value="F:transcription corepressor activity"/>
    <property type="evidence" value="ECO:0007669"/>
    <property type="project" value="Ensembl"/>
</dbReference>
<dbReference type="GO" id="GO:0010614">
    <property type="term" value="P:negative regulation of cardiac muscle hypertrophy"/>
    <property type="evidence" value="ECO:0000250"/>
    <property type="project" value="UniProtKB"/>
</dbReference>
<dbReference type="GO" id="GO:1903243">
    <property type="term" value="P:negative regulation of cardiac muscle hypertrophy in response to stress"/>
    <property type="evidence" value="ECO:0000250"/>
    <property type="project" value="UniProtKB"/>
</dbReference>
<dbReference type="GO" id="GO:0000122">
    <property type="term" value="P:negative regulation of transcription by RNA polymerase II"/>
    <property type="evidence" value="ECO:0000250"/>
    <property type="project" value="UniProtKB"/>
</dbReference>
<dbReference type="GO" id="GO:0045944">
    <property type="term" value="P:positive regulation of transcription by RNA polymerase II"/>
    <property type="evidence" value="ECO:0000250"/>
    <property type="project" value="UniProtKB"/>
</dbReference>
<dbReference type="GO" id="GO:0006366">
    <property type="term" value="P:transcription by RNA polymerase II"/>
    <property type="evidence" value="ECO:0007669"/>
    <property type="project" value="Ensembl"/>
</dbReference>
<dbReference type="InterPro" id="IPR029331">
    <property type="entry name" value="MLIP"/>
</dbReference>
<dbReference type="PANTHER" id="PTHR31514:SF1">
    <property type="entry name" value="MUSCULAR LMNA-INTERACTING PROTEIN"/>
    <property type="match status" value="1"/>
</dbReference>
<dbReference type="PANTHER" id="PTHR31514">
    <property type="entry name" value="MUSCULAR LMNA-INTERACTING PROTEIN MLIP"/>
    <property type="match status" value="1"/>
</dbReference>
<dbReference type="Pfam" id="PF15274">
    <property type="entry name" value="MLIP"/>
    <property type="match status" value="1"/>
</dbReference>
<proteinExistence type="evidence at protein level"/>